<proteinExistence type="evidence at protein level"/>
<reference key="1">
    <citation type="journal article" date="1998" name="Biochim. Biophys. Acta">
        <title>A gene cluster for 6-deoxy-L-talan synthesis in Actinobacillus actinomycetemcomitans.</title>
        <authorList>
            <person name="Nakano Y."/>
            <person name="Yoshida Y."/>
            <person name="Yamashita Y."/>
            <person name="Koga T."/>
        </authorList>
    </citation>
    <scope>NUCLEOTIDE SEQUENCE [GENOMIC DNA]</scope>
    <source>
        <strain>ATCC 33384 / DSM 8324 / CCUG 13227 / NCTC 9710 / Serotype c</strain>
    </source>
</reference>
<reference key="2">
    <citation type="journal article" date="2000" name="J. Biol. Chem.">
        <title>Thymidine diphosphate-6-deoxy-L-lyxo-4-hexulose reductase synthesizing dTDP-6-deoxy-L-talose from Actinobacillus actinomycetemcomitans.</title>
        <authorList>
            <person name="Nakano Y."/>
            <person name="Suzuki N."/>
            <person name="Yoshida Y."/>
            <person name="Nezu T."/>
            <person name="Yamashita Y."/>
            <person name="Koga T."/>
        </authorList>
    </citation>
    <scope>FUNCTION</scope>
    <scope>CATALYTIC ACTIVITY</scope>
    <scope>PATHWAY</scope>
    <scope>GENE NAME</scope>
    <source>
        <strain>ATCC 33384 / DSM 8324 / CCUG 13227 / NCTC 9710 / Serotype c</strain>
    </source>
</reference>
<comment type="function">
    <text evidence="2">Catalyzes the reduction of dTDP-6-deoxy-L-lyxo-4-hexulose to dTDP-6-deoxy-L-talose.</text>
</comment>
<comment type="catalytic activity">
    <reaction evidence="2">
        <text>dTDP-6-deoxy-beta-L-talose + NAD(+) = dTDP-4-dehydro-beta-L-rhamnose + NADH + H(+)</text>
        <dbReference type="Rhea" id="RHEA:34447"/>
        <dbReference type="ChEBI" id="CHEBI:15378"/>
        <dbReference type="ChEBI" id="CHEBI:57540"/>
        <dbReference type="ChEBI" id="CHEBI:57945"/>
        <dbReference type="ChEBI" id="CHEBI:62830"/>
        <dbReference type="ChEBI" id="CHEBI:68576"/>
        <dbReference type="EC" id="1.1.1.339"/>
    </reaction>
</comment>
<comment type="pathway">
    <text evidence="2">Bacterial outer membrane biogenesis; LPS O-antigen biosynthesis.</text>
</comment>
<comment type="similarity">
    <text evidence="3">Belongs to the NAD(P)-dependent epimerase/dehydratase family.</text>
</comment>
<protein>
    <recommendedName>
        <fullName>dTDP-6-deoxy-L-talose 4-dehydrogenase (NAD(+))</fullName>
        <ecNumber>1.1.1.339</ecNumber>
    </recommendedName>
    <alternativeName>
        <fullName>dTDP-6-deoxy-L-lyxo-4-hexulose reductase</fullName>
    </alternativeName>
</protein>
<name>TLL_AGGAC</name>
<organism>
    <name type="scientific">Aggregatibacter actinomycetemcomitans</name>
    <name type="common">Actinobacillus actinomycetemcomitans</name>
    <name type="synonym">Haemophilus actinomycetemcomitans</name>
    <dbReference type="NCBI Taxonomy" id="714"/>
    <lineage>
        <taxon>Bacteria</taxon>
        <taxon>Pseudomonadati</taxon>
        <taxon>Pseudomonadota</taxon>
        <taxon>Gammaproteobacteria</taxon>
        <taxon>Pasteurellales</taxon>
        <taxon>Pasteurellaceae</taxon>
        <taxon>Aggregatibacter</taxon>
    </lineage>
</organism>
<dbReference type="EC" id="1.1.1.339"/>
<dbReference type="EMBL" id="AB010415">
    <property type="protein sequence ID" value="BAA28138.1"/>
    <property type="molecule type" value="Genomic_DNA"/>
</dbReference>
<dbReference type="PIR" id="T00109">
    <property type="entry name" value="T00109"/>
</dbReference>
<dbReference type="RefSeq" id="WP_005574044.1">
    <property type="nucleotide sequence ID" value="NZ_VSEW01000001.1"/>
</dbReference>
<dbReference type="SMR" id="O66256"/>
<dbReference type="KEGG" id="ag:BAA28138"/>
<dbReference type="OMA" id="WIGKYVV"/>
<dbReference type="UniPathway" id="UPA00281"/>
<dbReference type="GO" id="GO:0016491">
    <property type="term" value="F:oxidoreductase activity"/>
    <property type="evidence" value="ECO:0007669"/>
    <property type="project" value="UniProtKB-KW"/>
</dbReference>
<dbReference type="GO" id="GO:0009243">
    <property type="term" value="P:O antigen biosynthetic process"/>
    <property type="evidence" value="ECO:0007669"/>
    <property type="project" value="UniProtKB-UniPathway"/>
</dbReference>
<dbReference type="Gene3D" id="3.40.50.720">
    <property type="entry name" value="NAD(P)-binding Rossmann-like Domain"/>
    <property type="match status" value="1"/>
</dbReference>
<dbReference type="InterPro" id="IPR001509">
    <property type="entry name" value="Epimerase_deHydtase"/>
</dbReference>
<dbReference type="InterPro" id="IPR036291">
    <property type="entry name" value="NAD(P)-bd_dom_sf"/>
</dbReference>
<dbReference type="PANTHER" id="PTHR43000">
    <property type="entry name" value="DTDP-D-GLUCOSE 4,6-DEHYDRATASE-RELATED"/>
    <property type="match status" value="1"/>
</dbReference>
<dbReference type="Pfam" id="PF01370">
    <property type="entry name" value="Epimerase"/>
    <property type="match status" value="1"/>
</dbReference>
<dbReference type="SUPFAM" id="SSF51735">
    <property type="entry name" value="NAD(P)-binding Rossmann-fold domains"/>
    <property type="match status" value="1"/>
</dbReference>
<sequence>MNIIITGANGYIGRYVVKELLNKGHKVIAILFDGESPHSFLSGAELFYGDIFALSQEKKVDLVQNAECLLHLAWQAGFNHRDPSHLNNVMKHYQFLTSMAELGIKNISVAGTMHEVGYFVGPIDANTPCNPRNPYGIAKNFLRQAMFDFASVTPELNLRWLRFYYITGDDRFNNSIFTKILKAEDEVQEYFPLNSGEMLYDFVDIKDLSLQIEERIISKESGIFNCCSGKPKSLRTAVEEFIAEHNLKIKPKYNVFPARSYDSMAVWGAK</sequence>
<keyword id="KW-0448">Lipopolysaccharide biosynthesis</keyword>
<keyword id="KW-0520">NAD</keyword>
<keyword id="KW-0560">Oxidoreductase</keyword>
<evidence type="ECO:0000250" key="1"/>
<evidence type="ECO:0000269" key="2">
    <source>
    </source>
</evidence>
<evidence type="ECO:0000305" key="3"/>
<feature type="chain" id="PRO_0000424092" description="dTDP-6-deoxy-L-talose 4-dehydrogenase (NAD(+))">
    <location>
        <begin position="1"/>
        <end position="270"/>
    </location>
</feature>
<feature type="active site" description="Proton acceptor" evidence="1">
    <location>
        <position position="135"/>
    </location>
</feature>
<feature type="binding site" evidence="1">
    <location>
        <begin position="11"/>
        <end position="12"/>
    </location>
    <ligand>
        <name>NAD(+)</name>
        <dbReference type="ChEBI" id="CHEBI:57540"/>
    </ligand>
</feature>
<feature type="binding site" evidence="1">
    <location>
        <begin position="50"/>
        <end position="51"/>
    </location>
    <ligand>
        <name>NAD(+)</name>
        <dbReference type="ChEBI" id="CHEBI:57540"/>
    </ligand>
</feature>
<feature type="binding site" evidence="1">
    <location>
        <begin position="72"/>
        <end position="76"/>
    </location>
    <ligand>
        <name>NAD(+)</name>
        <dbReference type="ChEBI" id="CHEBI:57540"/>
    </ligand>
</feature>
<feature type="binding site" evidence="1">
    <location>
        <position position="87"/>
    </location>
    <ligand>
        <name>NAD(+)</name>
        <dbReference type="ChEBI" id="CHEBI:57540"/>
    </ligand>
</feature>
<feature type="binding site" evidence="1">
    <location>
        <position position="112"/>
    </location>
    <ligand>
        <name>NAD(+)</name>
        <dbReference type="ChEBI" id="CHEBI:57540"/>
    </ligand>
</feature>
<feature type="binding site" evidence="1">
    <location>
        <position position="112"/>
    </location>
    <ligand>
        <name>substrate</name>
    </ligand>
</feature>
<feature type="binding site" evidence="1">
    <location>
        <position position="135"/>
    </location>
    <ligand>
        <name>NAD(+)</name>
        <dbReference type="ChEBI" id="CHEBI:57540"/>
    </ligand>
</feature>
<feature type="binding site" evidence="1">
    <location>
        <position position="135"/>
    </location>
    <ligand>
        <name>substrate</name>
    </ligand>
</feature>
<feature type="binding site" evidence="1">
    <location>
        <position position="139"/>
    </location>
    <ligand>
        <name>NAD(+)</name>
        <dbReference type="ChEBI" id="CHEBI:57540"/>
    </ligand>
</feature>
<accession>O66256</accession>
<gene>
    <name type="primary">tll</name>
</gene>